<accession>Q5AUY0</accession>
<accession>A0A1U8QSV1</accession>
<accession>C8V4K0</accession>
<gene>
    <name evidence="7" type="primary">dbaF</name>
    <name type="ORF">ANIA_07900</name>
</gene>
<name>DBAF_EMENI</name>
<comment type="function">
    <text evidence="4 5 9">FAD-dependent oxidoreductase; part of the gene cluster that mediates the biosynthesis of the antibiotic 2,4-dihydroxy-3-methyl-6-(2-oxopropyl)benzaldehyde (DHMBA) and its derivatives (PubMed:22510154, PubMed:23001671). The direct non-reducing polyketide synthase dbaI product is 2,4-dihydroxy-3-methyl-6-(2-oxopropyl)benzaldehyde (DHMBA), produced by condensation of one acetyl-CoA starter unit with 4 malonyl-CoA units and one methylation step (PubMed:22510154). The FAD-dependent monooxygenase dbaH is responsible for the synthesis of yellow pigments derived from the oxidation of DHMBA (PubMed:23001671). The roles of dbaB, C, E and F have still to be determined (Probable).</text>
</comment>
<comment type="cofactor">
    <cofactor evidence="1">
        <name>FAD</name>
        <dbReference type="ChEBI" id="CHEBI:57692"/>
    </cofactor>
</comment>
<comment type="pathway">
    <text evidence="9">Secondary metabolite biosynthesis.</text>
</comment>
<comment type="induction">
    <text evidence="5 6">Deletion of the conserved eukaryotic csnE deneddylase subunit of the COP9 signalosome leading to defect in protein degradation results in the activation of the silenced dba gene cluster (PubMed:23001671). Expression is positively regulated by the dba cluster specific transcription factors dbaA and dbaG (PubMed:23001671). Expression is also controlled by the transcription factor flbB (PubMed:25701285).</text>
</comment>
<comment type="disruption phenotype">
    <text evidence="5">Reduces the amounts of DHMDA produced.</text>
</comment>
<comment type="similarity">
    <text evidence="8">Belongs to the beta-cyclopiazonate dehydrogenase family.</text>
</comment>
<keyword id="KW-0274">FAD</keyword>
<keyword id="KW-0285">Flavoprotein</keyword>
<keyword id="KW-0325">Glycoprotein</keyword>
<keyword id="KW-0560">Oxidoreductase</keyword>
<keyword id="KW-1185">Reference proteome</keyword>
<keyword id="KW-0732">Signal</keyword>
<organism>
    <name type="scientific">Emericella nidulans (strain FGSC A4 / ATCC 38163 / CBS 112.46 / NRRL 194 / M139)</name>
    <name type="common">Aspergillus nidulans</name>
    <dbReference type="NCBI Taxonomy" id="227321"/>
    <lineage>
        <taxon>Eukaryota</taxon>
        <taxon>Fungi</taxon>
        <taxon>Dikarya</taxon>
        <taxon>Ascomycota</taxon>
        <taxon>Pezizomycotina</taxon>
        <taxon>Eurotiomycetes</taxon>
        <taxon>Eurotiomycetidae</taxon>
        <taxon>Eurotiales</taxon>
        <taxon>Aspergillaceae</taxon>
        <taxon>Aspergillus</taxon>
        <taxon>Aspergillus subgen. Nidulantes</taxon>
    </lineage>
</organism>
<reference key="1">
    <citation type="journal article" date="2005" name="Nature">
        <title>Sequencing of Aspergillus nidulans and comparative analysis with A. fumigatus and A. oryzae.</title>
        <authorList>
            <person name="Galagan J.E."/>
            <person name="Calvo S.E."/>
            <person name="Cuomo C."/>
            <person name="Ma L.-J."/>
            <person name="Wortman J.R."/>
            <person name="Batzoglou S."/>
            <person name="Lee S.-I."/>
            <person name="Bastuerkmen M."/>
            <person name="Spevak C.C."/>
            <person name="Clutterbuck J."/>
            <person name="Kapitonov V."/>
            <person name="Jurka J."/>
            <person name="Scazzocchio C."/>
            <person name="Farman M.L."/>
            <person name="Butler J."/>
            <person name="Purcell S."/>
            <person name="Harris S."/>
            <person name="Braus G.H."/>
            <person name="Draht O."/>
            <person name="Busch S."/>
            <person name="D'Enfert C."/>
            <person name="Bouchier C."/>
            <person name="Goldman G.H."/>
            <person name="Bell-Pedersen D."/>
            <person name="Griffiths-Jones S."/>
            <person name="Doonan J.H."/>
            <person name="Yu J."/>
            <person name="Vienken K."/>
            <person name="Pain A."/>
            <person name="Freitag M."/>
            <person name="Selker E.U."/>
            <person name="Archer D.B."/>
            <person name="Penalva M.A."/>
            <person name="Oakley B.R."/>
            <person name="Momany M."/>
            <person name="Tanaka T."/>
            <person name="Kumagai T."/>
            <person name="Asai K."/>
            <person name="Machida M."/>
            <person name="Nierman W.C."/>
            <person name="Denning D.W."/>
            <person name="Caddick M.X."/>
            <person name="Hynes M."/>
            <person name="Paoletti M."/>
            <person name="Fischer R."/>
            <person name="Miller B.L."/>
            <person name="Dyer P.S."/>
            <person name="Sachs M.S."/>
            <person name="Osmani S.A."/>
            <person name="Birren B.W."/>
        </authorList>
    </citation>
    <scope>NUCLEOTIDE SEQUENCE [LARGE SCALE GENOMIC DNA]</scope>
    <source>
        <strain>FGSC A4 / ATCC 38163 / CBS 112.46 / NRRL 194 / M139</strain>
    </source>
</reference>
<reference key="2">
    <citation type="journal article" date="2009" name="Fungal Genet. Biol.">
        <title>The 2008 update of the Aspergillus nidulans genome annotation: a community effort.</title>
        <authorList>
            <person name="Wortman J.R."/>
            <person name="Gilsenan J.M."/>
            <person name="Joardar V."/>
            <person name="Deegan J."/>
            <person name="Clutterbuck J."/>
            <person name="Andersen M.R."/>
            <person name="Archer D."/>
            <person name="Bencina M."/>
            <person name="Braus G."/>
            <person name="Coutinho P."/>
            <person name="von Dohren H."/>
            <person name="Doonan J."/>
            <person name="Driessen A.J."/>
            <person name="Durek P."/>
            <person name="Espeso E."/>
            <person name="Fekete E."/>
            <person name="Flipphi M."/>
            <person name="Estrada C.G."/>
            <person name="Geysens S."/>
            <person name="Goldman G."/>
            <person name="de Groot P.W."/>
            <person name="Hansen K."/>
            <person name="Harris S.D."/>
            <person name="Heinekamp T."/>
            <person name="Helmstaedt K."/>
            <person name="Henrissat B."/>
            <person name="Hofmann G."/>
            <person name="Homan T."/>
            <person name="Horio T."/>
            <person name="Horiuchi H."/>
            <person name="James S."/>
            <person name="Jones M."/>
            <person name="Karaffa L."/>
            <person name="Karanyi Z."/>
            <person name="Kato M."/>
            <person name="Keller N."/>
            <person name="Kelly D.E."/>
            <person name="Kiel J.A."/>
            <person name="Kim J.M."/>
            <person name="van der Klei I.J."/>
            <person name="Klis F.M."/>
            <person name="Kovalchuk A."/>
            <person name="Krasevec N."/>
            <person name="Kubicek C.P."/>
            <person name="Liu B."/>
            <person name="Maccabe A."/>
            <person name="Meyer V."/>
            <person name="Mirabito P."/>
            <person name="Miskei M."/>
            <person name="Mos M."/>
            <person name="Mullins J."/>
            <person name="Nelson D.R."/>
            <person name="Nielsen J."/>
            <person name="Oakley B.R."/>
            <person name="Osmani S.A."/>
            <person name="Pakula T."/>
            <person name="Paszewski A."/>
            <person name="Paulsen I."/>
            <person name="Pilsyk S."/>
            <person name="Pocsi I."/>
            <person name="Punt P.J."/>
            <person name="Ram A.F."/>
            <person name="Ren Q."/>
            <person name="Robellet X."/>
            <person name="Robson G."/>
            <person name="Seiboth B."/>
            <person name="van Solingen P."/>
            <person name="Specht T."/>
            <person name="Sun J."/>
            <person name="Taheri-Talesh N."/>
            <person name="Takeshita N."/>
            <person name="Ussery D."/>
            <person name="vanKuyk P.A."/>
            <person name="Visser H."/>
            <person name="van de Vondervoort P.J."/>
            <person name="de Vries R.P."/>
            <person name="Walton J."/>
            <person name="Xiang X."/>
            <person name="Xiong Y."/>
            <person name="Zeng A.P."/>
            <person name="Brandt B.W."/>
            <person name="Cornell M.J."/>
            <person name="van den Hondel C.A."/>
            <person name="Visser J."/>
            <person name="Oliver S.G."/>
            <person name="Turner G."/>
        </authorList>
    </citation>
    <scope>GENOME REANNOTATION</scope>
    <source>
        <strain>FGSC A4 / ATCC 38163 / CBS 112.46 / NRRL 194 / M139</strain>
    </source>
</reference>
<reference key="3">
    <citation type="journal article" date="2012" name="Appl. Environ. Microbiol.">
        <title>Breaking the silence: protein stabilization uncovers silenced biosynthetic gene clusters in the fungus Aspergillus nidulans.</title>
        <authorList>
            <person name="Gerke J."/>
            <person name="Bayram O."/>
            <person name="Feussner K."/>
            <person name="Landesfeind M."/>
            <person name="Shelest E."/>
            <person name="Feussner I."/>
            <person name="Braus G.H."/>
        </authorList>
    </citation>
    <scope>IDENTIFICATION</scope>
    <scope>INDUCTION</scope>
    <scope>FUNCTION</scope>
    <scope>DISRUPTION PHENOTYPE</scope>
    <scope>PATHWAY</scope>
</reference>
<reference key="4">
    <citation type="journal article" date="2012" name="J. Am. Chem. Soc.">
        <title>Illuminating the diversity of aromatic polyketide synthases in Aspergillus nidulans.</title>
        <authorList>
            <person name="Ahuja M."/>
            <person name="Chiang Y.M."/>
            <person name="Chang S.L."/>
            <person name="Praseuth M.B."/>
            <person name="Entwistle R."/>
            <person name="Sanchez J.F."/>
            <person name="Lo H.C."/>
            <person name="Yeh H.H."/>
            <person name="Oakley B.R."/>
            <person name="Wang C.C."/>
        </authorList>
    </citation>
    <scope>FUNCTION</scope>
</reference>
<reference key="5">
    <citation type="journal article" date="2015" name="Genetics">
        <title>Beyond asexual development: modifications in the gene expression profile caused by the absence of the Aspergillus nidulans transcription factor FlbB.</title>
        <authorList>
            <person name="Oiartzabal-Arano E."/>
            <person name="Garzia A."/>
            <person name="Gorostidi A."/>
            <person name="Ugalde U."/>
            <person name="Espeso E.A."/>
            <person name="Etxebeste O."/>
        </authorList>
    </citation>
    <scope>INDUCTION</scope>
</reference>
<evidence type="ECO:0000250" key="1">
    <source>
        <dbReference type="UniProtKB" id="B8NI10"/>
    </source>
</evidence>
<evidence type="ECO:0000255" key="2"/>
<evidence type="ECO:0000255" key="3">
    <source>
        <dbReference type="PROSITE-ProRule" id="PRU00498"/>
    </source>
</evidence>
<evidence type="ECO:0000269" key="4">
    <source>
    </source>
</evidence>
<evidence type="ECO:0000269" key="5">
    <source>
    </source>
</evidence>
<evidence type="ECO:0000269" key="6">
    <source>
    </source>
</evidence>
<evidence type="ECO:0000303" key="7">
    <source>
    </source>
</evidence>
<evidence type="ECO:0000305" key="8"/>
<evidence type="ECO:0000305" key="9">
    <source>
    </source>
</evidence>
<dbReference type="EC" id="1.21.-.-" evidence="9"/>
<dbReference type="EMBL" id="AACD01000135">
    <property type="protein sequence ID" value="EAA59554.1"/>
    <property type="molecule type" value="Genomic_DNA"/>
</dbReference>
<dbReference type="EMBL" id="BN001302">
    <property type="protein sequence ID" value="CBF73488.1"/>
    <property type="molecule type" value="Genomic_DNA"/>
</dbReference>
<dbReference type="RefSeq" id="XP_681169.1">
    <property type="nucleotide sequence ID" value="XM_676077.1"/>
</dbReference>
<dbReference type="SMR" id="Q5AUY0"/>
<dbReference type="STRING" id="227321.Q5AUY0"/>
<dbReference type="GlyCosmos" id="Q5AUY0">
    <property type="glycosylation" value="5 sites, No reported glycans"/>
</dbReference>
<dbReference type="EnsemblFungi" id="CBF73488">
    <property type="protein sequence ID" value="CBF73488"/>
    <property type="gene ID" value="ANIA_07900"/>
</dbReference>
<dbReference type="GeneID" id="2869100"/>
<dbReference type="KEGG" id="ani:ANIA_07900"/>
<dbReference type="eggNOG" id="ENOG502SMFE">
    <property type="taxonomic scope" value="Eukaryota"/>
</dbReference>
<dbReference type="HOGENOM" id="CLU_028280_0_0_1"/>
<dbReference type="InParanoid" id="Q5AUY0"/>
<dbReference type="OMA" id="GSSQVWN"/>
<dbReference type="OrthoDB" id="68575at2759"/>
<dbReference type="Proteomes" id="UP000000560">
    <property type="component" value="Chromosome II"/>
</dbReference>
<dbReference type="GO" id="GO:0016491">
    <property type="term" value="F:oxidoreductase activity"/>
    <property type="evidence" value="ECO:0000318"/>
    <property type="project" value="GO_Central"/>
</dbReference>
<dbReference type="FunFam" id="3.30.70.1990:FF:000001">
    <property type="entry name" value="Amine oxidase, flavin-containing superfamily"/>
    <property type="match status" value="1"/>
</dbReference>
<dbReference type="Gene3D" id="1.10.405.20">
    <property type="match status" value="1"/>
</dbReference>
<dbReference type="Gene3D" id="3.30.70.1990">
    <property type="match status" value="1"/>
</dbReference>
<dbReference type="Gene3D" id="3.50.50.60">
    <property type="entry name" value="FAD/NAD(P)-binding domain"/>
    <property type="match status" value="1"/>
</dbReference>
<dbReference type="InterPro" id="IPR036188">
    <property type="entry name" value="FAD/NAD-bd_sf"/>
</dbReference>
<dbReference type="InterPro" id="IPR050464">
    <property type="entry name" value="Zeta_carotene_desat/Oxidored"/>
</dbReference>
<dbReference type="PANTHER" id="PTHR42923:SF26">
    <property type="entry name" value="FMN REDUCTASE LOT6, PUTATIVE (AFU_ORTHOLOGUE AFUA_7G06600)-RELATED"/>
    <property type="match status" value="1"/>
</dbReference>
<dbReference type="PANTHER" id="PTHR42923">
    <property type="entry name" value="PROTOPORPHYRINOGEN OXIDASE"/>
    <property type="match status" value="1"/>
</dbReference>
<dbReference type="Pfam" id="PF13450">
    <property type="entry name" value="NAD_binding_8"/>
    <property type="match status" value="1"/>
</dbReference>
<dbReference type="PRINTS" id="PR00411">
    <property type="entry name" value="PNDRDTASEI"/>
</dbReference>
<dbReference type="SUPFAM" id="SSF51905">
    <property type="entry name" value="FAD/NAD(P)-binding domain"/>
    <property type="match status" value="1"/>
</dbReference>
<proteinExistence type="evidence at transcript level"/>
<feature type="signal peptide" evidence="2">
    <location>
        <begin position="1"/>
        <end position="20"/>
    </location>
</feature>
<feature type="chain" id="PRO_5010288538" description="FAD-dependent oxidoreductase dbaF" evidence="2">
    <location>
        <begin position="21"/>
        <end position="467"/>
    </location>
</feature>
<feature type="glycosylation site" description="N-linked (GlcNAc...) asparagine" evidence="3">
    <location>
        <position position="96"/>
    </location>
</feature>
<feature type="glycosylation site" description="N-linked (GlcNAc...) asparagine" evidence="3">
    <location>
        <position position="134"/>
    </location>
</feature>
<feature type="glycosylation site" description="N-linked (GlcNAc...) asparagine" evidence="3">
    <location>
        <position position="337"/>
    </location>
</feature>
<feature type="glycosylation site" description="N-linked (GlcNAc...) asparagine" evidence="3">
    <location>
        <position position="391"/>
    </location>
</feature>
<feature type="glycosylation site" description="N-linked (GlcNAc...) asparagine" evidence="3">
    <location>
        <position position="451"/>
    </location>
</feature>
<sequence>MKSVLASGALTLAFSLAALAADAFQASSWDSTHIIRRDVVIVGGGAAGTYAAIRLKDHGKSVVLVERRDRLGGHAVTYKDPNTGGSVDYGVQVYDNNTVVRDFFSRLNTPLADLSFASFGKPVYADFEEGMLLNLTAGTLGQDYINELNKYPYLDNGFELPDPVPEDLLLPWVEYIGKYNIDLSTAIATLARPAVTGNLLNILAIYVFNNLNHLLLHEMSGAVVVNANRDNSQLYRNAVSELQPDLLLRSRVVAGQRRTRKRDGVRLVVDTPTGRKLIIAKQLIVGMPPILDNMRTFGLDSHEHSVLSHIYGLPYYGGVVSDTGLAPGFSFKNYAANTSYNLAEIPSVVAFNPSSVDGLFYYWYNAPQPVSQRRIETEARDAIKTLQRLTNSTTQPEPKFLAFSDFAPYQLRVSAEAIRNGFYDDMYGLQGHRNTWYTGTLFVTGSSQVWNNTEVMLPEILAAVNSS</sequence>
<protein>
    <recommendedName>
        <fullName evidence="7">FAD-dependent oxidoreductase dbaF</fullName>
        <ecNumber evidence="9">1.21.-.-</ecNumber>
    </recommendedName>
    <alternativeName>
        <fullName evidence="7">Derivative of benzaldehyde biosynthesis cluster protein F</fullName>
    </alternativeName>
</protein>